<feature type="signal peptide" evidence="1">
    <location>
        <begin position="1"/>
        <end position="22"/>
    </location>
</feature>
<feature type="chain" id="PRO_1000060078" description="Flagellar P-ring protein">
    <location>
        <begin position="23"/>
        <end position="369"/>
    </location>
</feature>
<accession>A6V9B1</accession>
<dbReference type="EMBL" id="CP000744">
    <property type="protein sequence ID" value="ABR85574.1"/>
    <property type="molecule type" value="Genomic_DNA"/>
</dbReference>
<dbReference type="RefSeq" id="WP_003082169.1">
    <property type="nucleotide sequence ID" value="NC_009656.1"/>
</dbReference>
<dbReference type="SMR" id="A6V9B1"/>
<dbReference type="KEGG" id="pap:PSPA7_4293"/>
<dbReference type="HOGENOM" id="CLU_045235_1_0_6"/>
<dbReference type="Proteomes" id="UP000001582">
    <property type="component" value="Chromosome"/>
</dbReference>
<dbReference type="GO" id="GO:0009428">
    <property type="term" value="C:bacterial-type flagellum basal body, distal rod, P ring"/>
    <property type="evidence" value="ECO:0007669"/>
    <property type="project" value="InterPro"/>
</dbReference>
<dbReference type="GO" id="GO:0030288">
    <property type="term" value="C:outer membrane-bounded periplasmic space"/>
    <property type="evidence" value="ECO:0007669"/>
    <property type="project" value="InterPro"/>
</dbReference>
<dbReference type="GO" id="GO:0005198">
    <property type="term" value="F:structural molecule activity"/>
    <property type="evidence" value="ECO:0007669"/>
    <property type="project" value="InterPro"/>
</dbReference>
<dbReference type="GO" id="GO:0071973">
    <property type="term" value="P:bacterial-type flagellum-dependent cell motility"/>
    <property type="evidence" value="ECO:0007669"/>
    <property type="project" value="InterPro"/>
</dbReference>
<dbReference type="HAMAP" id="MF_00416">
    <property type="entry name" value="FlgI"/>
    <property type="match status" value="1"/>
</dbReference>
<dbReference type="InterPro" id="IPR001782">
    <property type="entry name" value="Flag_FlgI"/>
</dbReference>
<dbReference type="NCBIfam" id="NF003676">
    <property type="entry name" value="PRK05303.1"/>
    <property type="match status" value="1"/>
</dbReference>
<dbReference type="PANTHER" id="PTHR30381">
    <property type="entry name" value="FLAGELLAR P-RING PERIPLASMIC PROTEIN FLGI"/>
    <property type="match status" value="1"/>
</dbReference>
<dbReference type="PANTHER" id="PTHR30381:SF0">
    <property type="entry name" value="FLAGELLAR P-RING PROTEIN"/>
    <property type="match status" value="1"/>
</dbReference>
<dbReference type="Pfam" id="PF02119">
    <property type="entry name" value="FlgI"/>
    <property type="match status" value="1"/>
</dbReference>
<dbReference type="PRINTS" id="PR01010">
    <property type="entry name" value="FLGPRINGFLGI"/>
</dbReference>
<evidence type="ECO:0000255" key="1">
    <source>
        <dbReference type="HAMAP-Rule" id="MF_00416"/>
    </source>
</evidence>
<reference key="1">
    <citation type="submission" date="2007-06" db="EMBL/GenBank/DDBJ databases">
        <authorList>
            <person name="Dodson R.J."/>
            <person name="Harkins D."/>
            <person name="Paulsen I.T."/>
        </authorList>
    </citation>
    <scope>NUCLEOTIDE SEQUENCE [LARGE SCALE GENOMIC DNA]</scope>
    <source>
        <strain>DSM 24068 / PA7</strain>
    </source>
</reference>
<protein>
    <recommendedName>
        <fullName evidence="1">Flagellar P-ring protein</fullName>
    </recommendedName>
    <alternativeName>
        <fullName evidence="1">Basal body P-ring protein</fullName>
    </alternativeName>
</protein>
<proteinExistence type="inferred from homology"/>
<gene>
    <name evidence="1" type="primary">flgI</name>
    <name type="ordered locus">PSPA7_4293</name>
</gene>
<name>FLGI_PSEP7</name>
<organism>
    <name type="scientific">Pseudomonas paraeruginosa (strain DSM 24068 / PA7)</name>
    <name type="common">Pseudomonas aeruginosa (strain PA7)</name>
    <dbReference type="NCBI Taxonomy" id="381754"/>
    <lineage>
        <taxon>Bacteria</taxon>
        <taxon>Pseudomonadati</taxon>
        <taxon>Pseudomonadota</taxon>
        <taxon>Gammaproteobacteria</taxon>
        <taxon>Pseudomonadales</taxon>
        <taxon>Pseudomonadaceae</taxon>
        <taxon>Pseudomonas</taxon>
        <taxon>Pseudomonas paraeruginosa</taxon>
    </lineage>
</organism>
<keyword id="KW-0975">Bacterial flagellum</keyword>
<keyword id="KW-0574">Periplasm</keyword>
<keyword id="KW-0732">Signal</keyword>
<comment type="function">
    <text evidence="1">Assembles around the rod to form the L-ring and probably protects the motor/basal body from shearing forces during rotation.</text>
</comment>
<comment type="subunit">
    <text evidence="1">The basal body constitutes a major portion of the flagellar organelle and consists of four rings (L,P,S, and M) mounted on a central rod.</text>
</comment>
<comment type="subcellular location">
    <subcellularLocation>
        <location evidence="1">Periplasm</location>
    </subcellularLocation>
    <subcellularLocation>
        <location evidence="1">Bacterial flagellum basal body</location>
    </subcellularLocation>
</comment>
<comment type="similarity">
    <text evidence="1">Belongs to the FlgI family.</text>
</comment>
<sequence>MTKFKHLLALAALLLAAGAAQAERLKDIASIQGVRTNQLIGYGLVVGLSGSGDQTTQTPFTLQTFNNMLAQFGIKVPANVGNVQLKNVAAVSVHADLPPFAKPGQPIDVTVSSIGNAKSLRGGSLLMTPLKGIDGQVYAVAQGNLVVGGFDAEGRDGSKITVNVPSAGRIPAGATVERAVPSGFDQGNSLTLNLNRPDFTTAKRIVDRINELLGPGVAHAVDGGSVRVSAPLDPNQRVDYLSILENLDVQPGEAVAKVIINSRTGTIVIGQNVKVSPAAVTHGSLTVSITEDPIVSQPGAFSNGQTAVVPRSRVNAEEETKPMFKFGPGTTLDDIVRAVNQVGAAPSDLMAILEALKQAGALQADLIVI</sequence>